<dbReference type="EC" id="3.6.1.31" evidence="1"/>
<dbReference type="EMBL" id="CP000485">
    <property type="protein sequence ID" value="ABK84617.1"/>
    <property type="status" value="ALT_INIT"/>
    <property type="molecule type" value="Genomic_DNA"/>
</dbReference>
<dbReference type="SMR" id="A0RBM4"/>
<dbReference type="KEGG" id="btl:BALH_1267"/>
<dbReference type="HOGENOM" id="CLU_123337_0_0_9"/>
<dbReference type="UniPathway" id="UPA00031">
    <property type="reaction ID" value="UER00007"/>
</dbReference>
<dbReference type="GO" id="GO:0005737">
    <property type="term" value="C:cytoplasm"/>
    <property type="evidence" value="ECO:0007669"/>
    <property type="project" value="UniProtKB-SubCell"/>
</dbReference>
<dbReference type="GO" id="GO:0005524">
    <property type="term" value="F:ATP binding"/>
    <property type="evidence" value="ECO:0007669"/>
    <property type="project" value="UniProtKB-KW"/>
</dbReference>
<dbReference type="GO" id="GO:0004636">
    <property type="term" value="F:phosphoribosyl-ATP diphosphatase activity"/>
    <property type="evidence" value="ECO:0007669"/>
    <property type="project" value="UniProtKB-UniRule"/>
</dbReference>
<dbReference type="GO" id="GO:0000105">
    <property type="term" value="P:L-histidine biosynthetic process"/>
    <property type="evidence" value="ECO:0007669"/>
    <property type="project" value="UniProtKB-UniRule"/>
</dbReference>
<dbReference type="CDD" id="cd11534">
    <property type="entry name" value="NTP-PPase_HisIE_like"/>
    <property type="match status" value="1"/>
</dbReference>
<dbReference type="Gene3D" id="1.10.287.1080">
    <property type="entry name" value="MazG-like"/>
    <property type="match status" value="1"/>
</dbReference>
<dbReference type="HAMAP" id="MF_01020">
    <property type="entry name" value="HisE"/>
    <property type="match status" value="1"/>
</dbReference>
<dbReference type="InterPro" id="IPR008179">
    <property type="entry name" value="HisE"/>
</dbReference>
<dbReference type="InterPro" id="IPR021130">
    <property type="entry name" value="PRib-ATP_PPHydrolase-like"/>
</dbReference>
<dbReference type="NCBIfam" id="TIGR03188">
    <property type="entry name" value="histidine_hisI"/>
    <property type="match status" value="1"/>
</dbReference>
<dbReference type="PANTHER" id="PTHR42945">
    <property type="entry name" value="HISTIDINE BIOSYNTHESIS BIFUNCTIONAL PROTEIN"/>
    <property type="match status" value="1"/>
</dbReference>
<dbReference type="PANTHER" id="PTHR42945:SF9">
    <property type="entry name" value="HISTIDINE BIOSYNTHESIS BIFUNCTIONAL PROTEIN HISIE"/>
    <property type="match status" value="1"/>
</dbReference>
<dbReference type="Pfam" id="PF01503">
    <property type="entry name" value="PRA-PH"/>
    <property type="match status" value="1"/>
</dbReference>
<dbReference type="SUPFAM" id="SSF101386">
    <property type="entry name" value="all-alpha NTP pyrophosphatases"/>
    <property type="match status" value="1"/>
</dbReference>
<accession>A0RBM4</accession>
<feature type="chain" id="PRO_0000319640" description="Phosphoribosyl-ATP pyrophosphatase">
    <location>
        <begin position="1"/>
        <end position="107"/>
    </location>
</feature>
<organism>
    <name type="scientific">Bacillus thuringiensis (strain Al Hakam)</name>
    <dbReference type="NCBI Taxonomy" id="412694"/>
    <lineage>
        <taxon>Bacteria</taxon>
        <taxon>Bacillati</taxon>
        <taxon>Bacillota</taxon>
        <taxon>Bacilli</taxon>
        <taxon>Bacillales</taxon>
        <taxon>Bacillaceae</taxon>
        <taxon>Bacillus</taxon>
        <taxon>Bacillus cereus group</taxon>
    </lineage>
</organism>
<reference key="1">
    <citation type="journal article" date="2007" name="J. Bacteriol.">
        <title>The complete genome sequence of Bacillus thuringiensis Al Hakam.</title>
        <authorList>
            <person name="Challacombe J.F."/>
            <person name="Altherr M.R."/>
            <person name="Xie G."/>
            <person name="Bhotika S.S."/>
            <person name="Brown N."/>
            <person name="Bruce D."/>
            <person name="Campbell C.S."/>
            <person name="Campbell M.L."/>
            <person name="Chen J."/>
            <person name="Chertkov O."/>
            <person name="Cleland C."/>
            <person name="Dimitrijevic M."/>
            <person name="Doggett N.A."/>
            <person name="Fawcett J.J."/>
            <person name="Glavina T."/>
            <person name="Goodwin L.A."/>
            <person name="Green L.D."/>
            <person name="Han C.S."/>
            <person name="Hill K.K."/>
            <person name="Hitchcock P."/>
            <person name="Jackson P.J."/>
            <person name="Keim P."/>
            <person name="Kewalramani A.R."/>
            <person name="Longmire J."/>
            <person name="Lucas S."/>
            <person name="Malfatti S."/>
            <person name="Martinez D."/>
            <person name="McMurry K."/>
            <person name="Meincke L.J."/>
            <person name="Misra M."/>
            <person name="Moseman B.L."/>
            <person name="Mundt M."/>
            <person name="Munk A.C."/>
            <person name="Okinaka R.T."/>
            <person name="Parson-Quintana B."/>
            <person name="Reilly L.P."/>
            <person name="Richardson P."/>
            <person name="Robinson D.L."/>
            <person name="Saunders E."/>
            <person name="Tapia R."/>
            <person name="Tesmer J.G."/>
            <person name="Thayer N."/>
            <person name="Thompson L.S."/>
            <person name="Tice H."/>
            <person name="Ticknor L.O."/>
            <person name="Wills P.L."/>
            <person name="Gilna P."/>
            <person name="Brettin T.S."/>
        </authorList>
    </citation>
    <scope>NUCLEOTIDE SEQUENCE [LARGE SCALE GENOMIC DNA]</scope>
    <source>
        <strain>Al Hakam</strain>
    </source>
</reference>
<name>HIS2_BACAH</name>
<protein>
    <recommendedName>
        <fullName evidence="1">Phosphoribosyl-ATP pyrophosphatase</fullName>
        <shortName evidence="1">PRA-PH</shortName>
        <ecNumber evidence="1">3.6.1.31</ecNumber>
    </recommendedName>
</protein>
<sequence length="107" mass="12427">MENTFKLLFETIGERKRNPLPESYTNYLFSKGEDKILKKIGEECTEVIIASKNNDKEELVKEMVDVLYHCFVLLAEKNISLEDIMAEVTERNGKLSRVGDRREIDTL</sequence>
<comment type="catalytic activity">
    <reaction evidence="1">
        <text>1-(5-phospho-beta-D-ribosyl)-ATP + H2O = 1-(5-phospho-beta-D-ribosyl)-5'-AMP + diphosphate + H(+)</text>
        <dbReference type="Rhea" id="RHEA:22828"/>
        <dbReference type="ChEBI" id="CHEBI:15377"/>
        <dbReference type="ChEBI" id="CHEBI:15378"/>
        <dbReference type="ChEBI" id="CHEBI:33019"/>
        <dbReference type="ChEBI" id="CHEBI:59457"/>
        <dbReference type="ChEBI" id="CHEBI:73183"/>
        <dbReference type="EC" id="3.6.1.31"/>
    </reaction>
</comment>
<comment type="pathway">
    <text evidence="1">Amino-acid biosynthesis; L-histidine biosynthesis; L-histidine from 5-phospho-alpha-D-ribose 1-diphosphate: step 2/9.</text>
</comment>
<comment type="subcellular location">
    <subcellularLocation>
        <location evidence="1">Cytoplasm</location>
    </subcellularLocation>
</comment>
<comment type="similarity">
    <text evidence="1">Belongs to the PRA-PH family.</text>
</comment>
<comment type="sequence caution" evidence="2">
    <conflict type="erroneous initiation">
        <sequence resource="EMBL-CDS" id="ABK84617"/>
    </conflict>
</comment>
<proteinExistence type="inferred from homology"/>
<gene>
    <name evidence="1" type="primary">hisE</name>
    <name type="ordered locus">BALH_1267</name>
</gene>
<keyword id="KW-0028">Amino-acid biosynthesis</keyword>
<keyword id="KW-0067">ATP-binding</keyword>
<keyword id="KW-0963">Cytoplasm</keyword>
<keyword id="KW-0368">Histidine biosynthesis</keyword>
<keyword id="KW-0378">Hydrolase</keyword>
<keyword id="KW-0547">Nucleotide-binding</keyword>
<evidence type="ECO:0000255" key="1">
    <source>
        <dbReference type="HAMAP-Rule" id="MF_01020"/>
    </source>
</evidence>
<evidence type="ECO:0000305" key="2"/>